<gene>
    <name evidence="1" type="primary">metN1</name>
    <name type="ordered locus">YPO1073</name>
    <name type="ordered locus">y3104</name>
    <name type="ordered locus">YP_2776</name>
</gene>
<evidence type="ECO:0000255" key="1">
    <source>
        <dbReference type="HAMAP-Rule" id="MF_01719"/>
    </source>
</evidence>
<comment type="function">
    <text evidence="1">Part of the ABC transporter complex MetNIQ involved in methionine import. Responsible for energy coupling to the transport system.</text>
</comment>
<comment type="catalytic activity">
    <reaction evidence="1">
        <text>L-methionine(out) + ATP + H2O = L-methionine(in) + ADP + phosphate + H(+)</text>
        <dbReference type="Rhea" id="RHEA:29779"/>
        <dbReference type="ChEBI" id="CHEBI:15377"/>
        <dbReference type="ChEBI" id="CHEBI:15378"/>
        <dbReference type="ChEBI" id="CHEBI:30616"/>
        <dbReference type="ChEBI" id="CHEBI:43474"/>
        <dbReference type="ChEBI" id="CHEBI:57844"/>
        <dbReference type="ChEBI" id="CHEBI:456216"/>
        <dbReference type="EC" id="7.4.2.11"/>
    </reaction>
</comment>
<comment type="catalytic activity">
    <reaction evidence="1">
        <text>D-methionine(out) + ATP + H2O = D-methionine(in) + ADP + phosphate + H(+)</text>
        <dbReference type="Rhea" id="RHEA:29767"/>
        <dbReference type="ChEBI" id="CHEBI:15377"/>
        <dbReference type="ChEBI" id="CHEBI:15378"/>
        <dbReference type="ChEBI" id="CHEBI:30616"/>
        <dbReference type="ChEBI" id="CHEBI:43474"/>
        <dbReference type="ChEBI" id="CHEBI:57932"/>
        <dbReference type="ChEBI" id="CHEBI:456216"/>
        <dbReference type="EC" id="7.4.2.11"/>
    </reaction>
</comment>
<comment type="subunit">
    <text evidence="1">The complex is composed of two ATP-binding proteins (MetN), two transmembrane proteins (MetI) and a solute-binding protein (MetQ).</text>
</comment>
<comment type="subcellular location">
    <subcellularLocation>
        <location evidence="1">Cell inner membrane</location>
        <topology evidence="1">Peripheral membrane protein</topology>
    </subcellularLocation>
</comment>
<comment type="similarity">
    <text evidence="1">Belongs to the ABC transporter superfamily. Methionine importer (TC 3.A.1.24) family.</text>
</comment>
<sequence length="343" mass="37533">MIKLTHISKVFQQGSRTITALSDVSLHVPAGQIYGVIGASGAGKSTLIRCANMLERPTSGQVLVDDQDLTTLSEGQLTRARRQIGMIFQHFNLLSSRTVYGNIALPLELDNTSRADIKKRVNELLDLVGLTDKQDAYPANLSGGQKQRVAIARALASNPKVLLCDEATSALDPATTRSILELLKDINRRLGLTILLITHEMDVVKRICDQVAVISEGKLIEKDSVSEVFSHPKTPLAQQFIQSTLHLDIPEDYAKRMSPEPTVDHVPLLKLEFTGKSVDAPLISQAVRRFNIDIGILSSQMDYAGGVKFGVMLAELHGDVQDGLAAIKFLQDHHVKVEVLGYV</sequence>
<feature type="chain" id="PRO_0000092508" description="Methionine import ATP-binding protein MetN 1">
    <location>
        <begin position="1"/>
        <end position="343"/>
    </location>
</feature>
<feature type="domain" description="ABC transporter" evidence="1">
    <location>
        <begin position="2"/>
        <end position="241"/>
    </location>
</feature>
<feature type="binding site" evidence="1">
    <location>
        <begin position="38"/>
        <end position="45"/>
    </location>
    <ligand>
        <name>ATP</name>
        <dbReference type="ChEBI" id="CHEBI:30616"/>
    </ligand>
</feature>
<dbReference type="EC" id="7.4.2.11" evidence="1"/>
<dbReference type="EMBL" id="AL590842">
    <property type="protein sequence ID" value="CAL19739.1"/>
    <property type="molecule type" value="Genomic_DNA"/>
</dbReference>
<dbReference type="EMBL" id="AE009952">
    <property type="protein sequence ID" value="AAM86654.1"/>
    <property type="molecule type" value="Genomic_DNA"/>
</dbReference>
<dbReference type="EMBL" id="AE017042">
    <property type="protein sequence ID" value="AAS62960.1"/>
    <property type="molecule type" value="Genomic_DNA"/>
</dbReference>
<dbReference type="PIR" id="AI0131">
    <property type="entry name" value="AI0131"/>
</dbReference>
<dbReference type="RefSeq" id="YP_002346117.1">
    <property type="nucleotide sequence ID" value="NC_003143.1"/>
</dbReference>
<dbReference type="SMR" id="Q8ZH38"/>
<dbReference type="STRING" id="214092.YPO1073"/>
<dbReference type="PaxDb" id="214092-YPO1073"/>
<dbReference type="DNASU" id="1148051"/>
<dbReference type="EnsemblBacteria" id="AAS62960">
    <property type="protein sequence ID" value="AAS62960"/>
    <property type="gene ID" value="YP_2776"/>
</dbReference>
<dbReference type="KEGG" id="ype:YPO1073"/>
<dbReference type="KEGG" id="ypk:y3104"/>
<dbReference type="KEGG" id="ypm:YP_2776"/>
<dbReference type="PATRIC" id="fig|214092.21.peg.1362"/>
<dbReference type="eggNOG" id="COG1135">
    <property type="taxonomic scope" value="Bacteria"/>
</dbReference>
<dbReference type="HOGENOM" id="CLU_000604_1_3_6"/>
<dbReference type="OMA" id="FANPKHA"/>
<dbReference type="OrthoDB" id="9802264at2"/>
<dbReference type="Proteomes" id="UP000000815">
    <property type="component" value="Chromosome"/>
</dbReference>
<dbReference type="Proteomes" id="UP000001019">
    <property type="component" value="Chromosome"/>
</dbReference>
<dbReference type="Proteomes" id="UP000002490">
    <property type="component" value="Chromosome"/>
</dbReference>
<dbReference type="GO" id="GO:0009276">
    <property type="term" value="C:Gram-negative-bacterium-type cell wall"/>
    <property type="evidence" value="ECO:0007669"/>
    <property type="project" value="InterPro"/>
</dbReference>
<dbReference type="GO" id="GO:0005886">
    <property type="term" value="C:plasma membrane"/>
    <property type="evidence" value="ECO:0007669"/>
    <property type="project" value="UniProtKB-SubCell"/>
</dbReference>
<dbReference type="GO" id="GO:0033232">
    <property type="term" value="F:ABC-type D-methionine transporter activity"/>
    <property type="evidence" value="ECO:0007669"/>
    <property type="project" value="UniProtKB-EC"/>
</dbReference>
<dbReference type="GO" id="GO:0005524">
    <property type="term" value="F:ATP binding"/>
    <property type="evidence" value="ECO:0007669"/>
    <property type="project" value="UniProtKB-KW"/>
</dbReference>
<dbReference type="GO" id="GO:0016887">
    <property type="term" value="F:ATP hydrolysis activity"/>
    <property type="evidence" value="ECO:0007669"/>
    <property type="project" value="InterPro"/>
</dbReference>
<dbReference type="CDD" id="cd03258">
    <property type="entry name" value="ABC_MetN_methionine_transporter"/>
    <property type="match status" value="1"/>
</dbReference>
<dbReference type="FunFam" id="3.40.50.300:FF:000233">
    <property type="entry name" value="Methionine import ATP-binding protein MetN"/>
    <property type="match status" value="1"/>
</dbReference>
<dbReference type="Gene3D" id="3.30.70.260">
    <property type="match status" value="1"/>
</dbReference>
<dbReference type="Gene3D" id="3.40.50.300">
    <property type="entry name" value="P-loop containing nucleotide triphosphate hydrolases"/>
    <property type="match status" value="1"/>
</dbReference>
<dbReference type="InterPro" id="IPR003593">
    <property type="entry name" value="AAA+_ATPase"/>
</dbReference>
<dbReference type="InterPro" id="IPR012692">
    <property type="entry name" value="ABC_MetN_proteobac"/>
</dbReference>
<dbReference type="InterPro" id="IPR003439">
    <property type="entry name" value="ABC_transporter-like_ATP-bd"/>
</dbReference>
<dbReference type="InterPro" id="IPR017871">
    <property type="entry name" value="ABC_transporter-like_CS"/>
</dbReference>
<dbReference type="InterPro" id="IPR045865">
    <property type="entry name" value="ACT-like_dom_sf"/>
</dbReference>
<dbReference type="InterPro" id="IPR041701">
    <property type="entry name" value="MetN_ABC"/>
</dbReference>
<dbReference type="InterPro" id="IPR050086">
    <property type="entry name" value="MetN_ABC_transporter-like"/>
</dbReference>
<dbReference type="InterPro" id="IPR018449">
    <property type="entry name" value="NIL_domain"/>
</dbReference>
<dbReference type="InterPro" id="IPR027417">
    <property type="entry name" value="P-loop_NTPase"/>
</dbReference>
<dbReference type="NCBIfam" id="TIGR02314">
    <property type="entry name" value="ABC_MetN"/>
    <property type="match status" value="1"/>
</dbReference>
<dbReference type="PANTHER" id="PTHR43166">
    <property type="entry name" value="AMINO ACID IMPORT ATP-BINDING PROTEIN"/>
    <property type="match status" value="1"/>
</dbReference>
<dbReference type="PANTHER" id="PTHR43166:SF30">
    <property type="entry name" value="METHIONINE IMPORT ATP-BINDING PROTEIN METN"/>
    <property type="match status" value="1"/>
</dbReference>
<dbReference type="Pfam" id="PF00005">
    <property type="entry name" value="ABC_tran"/>
    <property type="match status" value="1"/>
</dbReference>
<dbReference type="Pfam" id="PF09383">
    <property type="entry name" value="NIL"/>
    <property type="match status" value="1"/>
</dbReference>
<dbReference type="SMART" id="SM00382">
    <property type="entry name" value="AAA"/>
    <property type="match status" value="1"/>
</dbReference>
<dbReference type="SMART" id="SM00930">
    <property type="entry name" value="NIL"/>
    <property type="match status" value="1"/>
</dbReference>
<dbReference type="SUPFAM" id="SSF55021">
    <property type="entry name" value="ACT-like"/>
    <property type="match status" value="1"/>
</dbReference>
<dbReference type="SUPFAM" id="SSF52540">
    <property type="entry name" value="P-loop containing nucleoside triphosphate hydrolases"/>
    <property type="match status" value="1"/>
</dbReference>
<dbReference type="PROSITE" id="PS00211">
    <property type="entry name" value="ABC_TRANSPORTER_1"/>
    <property type="match status" value="1"/>
</dbReference>
<dbReference type="PROSITE" id="PS50893">
    <property type="entry name" value="ABC_TRANSPORTER_2"/>
    <property type="match status" value="1"/>
</dbReference>
<dbReference type="PROSITE" id="PS51264">
    <property type="entry name" value="METN"/>
    <property type="match status" value="1"/>
</dbReference>
<keyword id="KW-0029">Amino-acid transport</keyword>
<keyword id="KW-0067">ATP-binding</keyword>
<keyword id="KW-0997">Cell inner membrane</keyword>
<keyword id="KW-1003">Cell membrane</keyword>
<keyword id="KW-0472">Membrane</keyword>
<keyword id="KW-0547">Nucleotide-binding</keyword>
<keyword id="KW-1185">Reference proteome</keyword>
<keyword id="KW-1278">Translocase</keyword>
<keyword id="KW-0813">Transport</keyword>
<reference key="1">
    <citation type="journal article" date="2001" name="Nature">
        <title>Genome sequence of Yersinia pestis, the causative agent of plague.</title>
        <authorList>
            <person name="Parkhill J."/>
            <person name="Wren B.W."/>
            <person name="Thomson N.R."/>
            <person name="Titball R.W."/>
            <person name="Holden M.T.G."/>
            <person name="Prentice M.B."/>
            <person name="Sebaihia M."/>
            <person name="James K.D."/>
            <person name="Churcher C.M."/>
            <person name="Mungall K.L."/>
            <person name="Baker S."/>
            <person name="Basham D."/>
            <person name="Bentley S.D."/>
            <person name="Brooks K."/>
            <person name="Cerdeno-Tarraga A.-M."/>
            <person name="Chillingworth T."/>
            <person name="Cronin A."/>
            <person name="Davies R.M."/>
            <person name="Davis P."/>
            <person name="Dougan G."/>
            <person name="Feltwell T."/>
            <person name="Hamlin N."/>
            <person name="Holroyd S."/>
            <person name="Jagels K."/>
            <person name="Karlyshev A.V."/>
            <person name="Leather S."/>
            <person name="Moule S."/>
            <person name="Oyston P.C.F."/>
            <person name="Quail M.A."/>
            <person name="Rutherford K.M."/>
            <person name="Simmonds M."/>
            <person name="Skelton J."/>
            <person name="Stevens K."/>
            <person name="Whitehead S."/>
            <person name="Barrell B.G."/>
        </authorList>
    </citation>
    <scope>NUCLEOTIDE SEQUENCE [LARGE SCALE GENOMIC DNA]</scope>
    <source>
        <strain>CO-92 / Biovar Orientalis</strain>
    </source>
</reference>
<reference key="2">
    <citation type="journal article" date="2002" name="J. Bacteriol.">
        <title>Genome sequence of Yersinia pestis KIM.</title>
        <authorList>
            <person name="Deng W."/>
            <person name="Burland V."/>
            <person name="Plunkett G. III"/>
            <person name="Boutin A."/>
            <person name="Mayhew G.F."/>
            <person name="Liss P."/>
            <person name="Perna N.T."/>
            <person name="Rose D.J."/>
            <person name="Mau B."/>
            <person name="Zhou S."/>
            <person name="Schwartz D.C."/>
            <person name="Fetherston J.D."/>
            <person name="Lindler L.E."/>
            <person name="Brubaker R.R."/>
            <person name="Plano G.V."/>
            <person name="Straley S.C."/>
            <person name="McDonough K.A."/>
            <person name="Nilles M.L."/>
            <person name="Matson J.S."/>
            <person name="Blattner F.R."/>
            <person name="Perry R.D."/>
        </authorList>
    </citation>
    <scope>NUCLEOTIDE SEQUENCE [LARGE SCALE GENOMIC DNA]</scope>
    <source>
        <strain>KIM10+ / Biovar Mediaevalis</strain>
    </source>
</reference>
<reference key="3">
    <citation type="journal article" date="2004" name="DNA Res.">
        <title>Complete genome sequence of Yersinia pestis strain 91001, an isolate avirulent to humans.</title>
        <authorList>
            <person name="Song Y."/>
            <person name="Tong Z."/>
            <person name="Wang J."/>
            <person name="Wang L."/>
            <person name="Guo Z."/>
            <person name="Han Y."/>
            <person name="Zhang J."/>
            <person name="Pei D."/>
            <person name="Zhou D."/>
            <person name="Qin H."/>
            <person name="Pang X."/>
            <person name="Han Y."/>
            <person name="Zhai J."/>
            <person name="Li M."/>
            <person name="Cui B."/>
            <person name="Qi Z."/>
            <person name="Jin L."/>
            <person name="Dai R."/>
            <person name="Chen F."/>
            <person name="Li S."/>
            <person name="Ye C."/>
            <person name="Du Z."/>
            <person name="Lin W."/>
            <person name="Wang J."/>
            <person name="Yu J."/>
            <person name="Yang H."/>
            <person name="Wang J."/>
            <person name="Huang P."/>
            <person name="Yang R."/>
        </authorList>
    </citation>
    <scope>NUCLEOTIDE SEQUENCE [LARGE SCALE GENOMIC DNA]</scope>
    <source>
        <strain>91001 / Biovar Mediaevalis</strain>
    </source>
</reference>
<organism>
    <name type="scientific">Yersinia pestis</name>
    <dbReference type="NCBI Taxonomy" id="632"/>
    <lineage>
        <taxon>Bacteria</taxon>
        <taxon>Pseudomonadati</taxon>
        <taxon>Pseudomonadota</taxon>
        <taxon>Gammaproteobacteria</taxon>
        <taxon>Enterobacterales</taxon>
        <taxon>Yersiniaceae</taxon>
        <taxon>Yersinia</taxon>
    </lineage>
</organism>
<proteinExistence type="inferred from homology"/>
<name>METN1_YERPE</name>
<accession>Q8ZH38</accession>
<accession>Q0WHX1</accession>
<protein>
    <recommendedName>
        <fullName evidence="1">Methionine import ATP-binding protein MetN 1</fullName>
        <ecNumber evidence="1">7.4.2.11</ecNumber>
    </recommendedName>
</protein>